<proteinExistence type="evidence at transcript level"/>
<name>LRC40_PONAB</name>
<accession>Q5RFE9</accession>
<protein>
    <recommendedName>
        <fullName>Leucine-rich repeat-containing protein 40</fullName>
    </recommendedName>
</protein>
<reference key="1">
    <citation type="submission" date="2004-11" db="EMBL/GenBank/DDBJ databases">
        <authorList>
            <consortium name="The German cDNA consortium"/>
        </authorList>
    </citation>
    <scope>NUCLEOTIDE SEQUENCE [LARGE SCALE MRNA]</scope>
    <source>
        <tissue>Kidney</tissue>
    </source>
</reference>
<feature type="chain" id="PRO_0000226260" description="Leucine-rich repeat-containing protein 40">
    <location>
        <begin position="1"/>
        <end position="602"/>
    </location>
</feature>
<feature type="repeat" description="LRR 1">
    <location>
        <begin position="83"/>
        <end position="104"/>
    </location>
</feature>
<feature type="repeat" description="LRR 2">
    <location>
        <begin position="106"/>
        <end position="127"/>
    </location>
</feature>
<feature type="repeat" description="LRR 3">
    <location>
        <begin position="129"/>
        <end position="150"/>
    </location>
</feature>
<feature type="repeat" description="LRR 4">
    <location>
        <begin position="152"/>
        <end position="173"/>
    </location>
</feature>
<feature type="repeat" description="LRR 5">
    <location>
        <begin position="175"/>
        <end position="196"/>
    </location>
</feature>
<feature type="repeat" description="LRR 6">
    <location>
        <begin position="198"/>
        <end position="219"/>
    </location>
</feature>
<feature type="repeat" description="LRR 7">
    <location>
        <begin position="221"/>
        <end position="242"/>
    </location>
</feature>
<feature type="repeat" description="LRR 8">
    <location>
        <begin position="244"/>
        <end position="265"/>
    </location>
</feature>
<feature type="repeat" description="LRR 9">
    <location>
        <begin position="266"/>
        <end position="286"/>
    </location>
</feature>
<feature type="repeat" description="LRR 10">
    <location>
        <begin position="290"/>
        <end position="311"/>
    </location>
</feature>
<feature type="repeat" description="LRR 11">
    <location>
        <begin position="313"/>
        <end position="335"/>
    </location>
</feature>
<feature type="repeat" description="LRR 12">
    <location>
        <begin position="336"/>
        <end position="356"/>
    </location>
</feature>
<feature type="repeat" description="LRR 13">
    <location>
        <begin position="400"/>
        <end position="421"/>
    </location>
</feature>
<feature type="repeat" description="LRR 14">
    <location>
        <begin position="426"/>
        <end position="447"/>
    </location>
</feature>
<feature type="repeat" description="LRR 15">
    <location>
        <begin position="450"/>
        <end position="472"/>
    </location>
</feature>
<feature type="repeat" description="LRR 16">
    <location>
        <begin position="473"/>
        <end position="494"/>
    </location>
</feature>
<feature type="repeat" description="LRR 17">
    <location>
        <begin position="496"/>
        <end position="517"/>
    </location>
</feature>
<feature type="repeat" description="LRR 18">
    <location>
        <begin position="519"/>
        <end position="540"/>
    </location>
</feature>
<feature type="repeat" description="LRR 19">
    <location>
        <begin position="543"/>
        <end position="564"/>
    </location>
</feature>
<feature type="repeat" description="LRR 20">
    <location>
        <begin position="566"/>
        <end position="586"/>
    </location>
</feature>
<feature type="region of interest" description="Disordered" evidence="2">
    <location>
        <begin position="1"/>
        <end position="22"/>
    </location>
</feature>
<feature type="modified residue" description="Phosphoserine" evidence="1">
    <location>
        <position position="71"/>
    </location>
</feature>
<organism>
    <name type="scientific">Pongo abelii</name>
    <name type="common">Sumatran orangutan</name>
    <name type="synonym">Pongo pygmaeus abelii</name>
    <dbReference type="NCBI Taxonomy" id="9601"/>
    <lineage>
        <taxon>Eukaryota</taxon>
        <taxon>Metazoa</taxon>
        <taxon>Chordata</taxon>
        <taxon>Craniata</taxon>
        <taxon>Vertebrata</taxon>
        <taxon>Euteleostomi</taxon>
        <taxon>Mammalia</taxon>
        <taxon>Eutheria</taxon>
        <taxon>Euarchontoglires</taxon>
        <taxon>Primates</taxon>
        <taxon>Haplorrhini</taxon>
        <taxon>Catarrhini</taxon>
        <taxon>Hominidae</taxon>
        <taxon>Pongo</taxon>
    </lineage>
</organism>
<evidence type="ECO:0000250" key="1">
    <source>
        <dbReference type="UniProtKB" id="Q9H9A6"/>
    </source>
</evidence>
<evidence type="ECO:0000256" key="2">
    <source>
        <dbReference type="SAM" id="MobiDB-lite"/>
    </source>
</evidence>
<sequence length="602" mass="68329">MSRLKRIAGQDPRAGFKEGGRDCGTSVPQGLLKAARKSGQLNLSGRNLSEVPQCVWRINVDIPEEANQNLSFGATERWWEQTDLTKLIISNNKLQSLTDDLRLLPALTVLDIHDNQLTSLPSAIRELQNLQKLNVSHNKLKILPEEITNLRNLKCLYLQHNELTCISEGFEQFSNLEDLDLSNNRLTTVPASFSSLSSLVRLNLSSNELKSLPAEINRMKRLKHLDCNSNLLETIPPELAGMESLELLYLRRNKLRFLPEFPSCSLLKELHVGENQIEMLEAEHLKHLNSILVLDLRDNKLKSVPDEIILLQSLERLDLSNNDISSLPYSLGNLHLKFLALEGNPLRTIRREIINKGTQEVLKYLRSKIKDDGPSQSESATETAMTLPSESRVNIRAIITLKILDYSDKQATLIPDEVFDAVKSNIITSINFSKNQLCEIPKRMVELKEMVSDVNLSFNKLSFISLELCVLQKLTFLDLRNNFLNSLPEEVESLVRLQTINLSFNRFKMLPEVLYRIFTLETILISNNQVGSVDPQKMKMMENLTTLDLQNNDLLQIPPELGNCVNLRTLLLDGNPFRVPRAAILMKGTAGILEYLRDRIPT</sequence>
<gene>
    <name type="primary">LRRC40</name>
</gene>
<keyword id="KW-0433">Leucine-rich repeat</keyword>
<keyword id="KW-0597">Phosphoprotein</keyword>
<keyword id="KW-1185">Reference proteome</keyword>
<keyword id="KW-0677">Repeat</keyword>
<dbReference type="EMBL" id="CR857209">
    <property type="protein sequence ID" value="CAH89508.1"/>
    <property type="molecule type" value="mRNA"/>
</dbReference>
<dbReference type="RefSeq" id="NP_001124652.1">
    <property type="nucleotide sequence ID" value="NM_001131180.1"/>
</dbReference>
<dbReference type="SMR" id="Q5RFE9"/>
<dbReference type="FunCoup" id="Q5RFE9">
    <property type="interactions" value="1282"/>
</dbReference>
<dbReference type="STRING" id="9601.ENSPPYP00000001452"/>
<dbReference type="GeneID" id="100171493"/>
<dbReference type="KEGG" id="pon:100171493"/>
<dbReference type="CTD" id="55631"/>
<dbReference type="eggNOG" id="KOG0472">
    <property type="taxonomic scope" value="Eukaryota"/>
</dbReference>
<dbReference type="InParanoid" id="Q5RFE9"/>
<dbReference type="OrthoDB" id="660555at2759"/>
<dbReference type="Proteomes" id="UP000001595">
    <property type="component" value="Unplaced"/>
</dbReference>
<dbReference type="GO" id="GO:0005737">
    <property type="term" value="C:cytoplasm"/>
    <property type="evidence" value="ECO:0007669"/>
    <property type="project" value="TreeGrafter"/>
</dbReference>
<dbReference type="FunFam" id="3.80.10.10:FF:000116">
    <property type="entry name" value="Leucine-rich repeat-containing protein 40"/>
    <property type="match status" value="1"/>
</dbReference>
<dbReference type="FunFam" id="3.80.10.10:FF:000193">
    <property type="entry name" value="Leucine-rich repeat-containing protein 40"/>
    <property type="match status" value="1"/>
</dbReference>
<dbReference type="FunFam" id="3.80.10.10:FF:000265">
    <property type="entry name" value="Leucine-rich repeat-containing protein 40"/>
    <property type="match status" value="1"/>
</dbReference>
<dbReference type="FunFam" id="3.80.10.10:FF:000206">
    <property type="entry name" value="leucine-rich repeat-containing protein 40"/>
    <property type="match status" value="1"/>
</dbReference>
<dbReference type="Gene3D" id="3.80.10.10">
    <property type="entry name" value="Ribonuclease Inhibitor"/>
    <property type="match status" value="4"/>
</dbReference>
<dbReference type="InterPro" id="IPR001611">
    <property type="entry name" value="Leu-rich_rpt"/>
</dbReference>
<dbReference type="InterPro" id="IPR003591">
    <property type="entry name" value="Leu-rich_rpt_typical-subtyp"/>
</dbReference>
<dbReference type="InterPro" id="IPR032675">
    <property type="entry name" value="LRR_dom_sf"/>
</dbReference>
<dbReference type="InterPro" id="IPR050216">
    <property type="entry name" value="LRR_domain-containing"/>
</dbReference>
<dbReference type="PANTHER" id="PTHR48051">
    <property type="match status" value="1"/>
</dbReference>
<dbReference type="PANTHER" id="PTHR48051:SF1">
    <property type="entry name" value="RAS SUPPRESSOR PROTEIN 1"/>
    <property type="match status" value="1"/>
</dbReference>
<dbReference type="Pfam" id="PF00560">
    <property type="entry name" value="LRR_1"/>
    <property type="match status" value="1"/>
</dbReference>
<dbReference type="Pfam" id="PF13855">
    <property type="entry name" value="LRR_8"/>
    <property type="match status" value="4"/>
</dbReference>
<dbReference type="PRINTS" id="PR00019">
    <property type="entry name" value="LEURICHRPT"/>
</dbReference>
<dbReference type="SMART" id="SM00364">
    <property type="entry name" value="LRR_BAC"/>
    <property type="match status" value="11"/>
</dbReference>
<dbReference type="SMART" id="SM00365">
    <property type="entry name" value="LRR_SD22"/>
    <property type="match status" value="5"/>
</dbReference>
<dbReference type="SMART" id="SM00369">
    <property type="entry name" value="LRR_TYP"/>
    <property type="match status" value="13"/>
</dbReference>
<dbReference type="SUPFAM" id="SSF52058">
    <property type="entry name" value="L domain-like"/>
    <property type="match status" value="2"/>
</dbReference>
<dbReference type="PROSITE" id="PS51450">
    <property type="entry name" value="LRR"/>
    <property type="match status" value="17"/>
</dbReference>